<reference key="1">
    <citation type="journal article" date="1999" name="DNA Seq.">
        <title>Isolation and sequencing of cDNA clones coding for the catalytic unit of glucose-6-phosphatase from two haplochromine cichlid fishes.</title>
        <authorList>
            <person name="Nagl S."/>
            <person name="Mayer W.E."/>
            <person name="Klein J."/>
        </authorList>
    </citation>
    <scope>NUCLEOTIDE SEQUENCE [MRNA]</scope>
</reference>
<dbReference type="EC" id="3.1.3.9" evidence="2"/>
<dbReference type="EMBL" id="AF008946">
    <property type="protein sequence ID" value="AAB69286.1"/>
    <property type="molecule type" value="mRNA"/>
</dbReference>
<dbReference type="SMR" id="O42154"/>
<dbReference type="UniPathway" id="UPA00138"/>
<dbReference type="GO" id="GO:0005789">
    <property type="term" value="C:endoplasmic reticulum membrane"/>
    <property type="evidence" value="ECO:0007669"/>
    <property type="project" value="UniProtKB-SubCell"/>
</dbReference>
<dbReference type="GO" id="GO:0004346">
    <property type="term" value="F:glucose-6-phosphatase activity"/>
    <property type="evidence" value="ECO:0007669"/>
    <property type="project" value="UniProtKB-EC"/>
</dbReference>
<dbReference type="GO" id="GO:0006094">
    <property type="term" value="P:gluconeogenesis"/>
    <property type="evidence" value="ECO:0007669"/>
    <property type="project" value="UniProtKB-UniPathway"/>
</dbReference>
<dbReference type="GO" id="GO:0051156">
    <property type="term" value="P:glucose 6-phosphate metabolic process"/>
    <property type="evidence" value="ECO:0007669"/>
    <property type="project" value="TreeGrafter"/>
</dbReference>
<dbReference type="Gene3D" id="1.20.144.10">
    <property type="entry name" value="Phosphatidic acid phosphatase type 2/haloperoxidase"/>
    <property type="match status" value="1"/>
</dbReference>
<dbReference type="InterPro" id="IPR036938">
    <property type="entry name" value="P_Acid_Pase_2/haloperoxi_sf"/>
</dbReference>
<dbReference type="InterPro" id="IPR000326">
    <property type="entry name" value="P_Acid_Pase_2/haloperoxidase"/>
</dbReference>
<dbReference type="PANTHER" id="PTHR12591">
    <property type="entry name" value="GLUCOSE-6-PHOSPHATASE"/>
    <property type="match status" value="1"/>
</dbReference>
<dbReference type="PANTHER" id="PTHR12591:SF5">
    <property type="entry name" value="GLUCOSE-6-PHOSPHATASE"/>
    <property type="match status" value="1"/>
</dbReference>
<dbReference type="Pfam" id="PF01569">
    <property type="entry name" value="PAP2"/>
    <property type="match status" value="1"/>
</dbReference>
<dbReference type="SMART" id="SM00014">
    <property type="entry name" value="acidPPc"/>
    <property type="match status" value="1"/>
</dbReference>
<dbReference type="SUPFAM" id="SSF48317">
    <property type="entry name" value="Acid phosphatase/Vanadium-dependent haloperoxidase"/>
    <property type="match status" value="1"/>
</dbReference>
<accession>O42154</accession>
<evidence type="ECO:0000250" key="1"/>
<evidence type="ECO:0000250" key="2">
    <source>
        <dbReference type="UniProtKB" id="P35575"/>
    </source>
</evidence>
<evidence type="ECO:0000255" key="3"/>
<evidence type="ECO:0000305" key="4"/>
<protein>
    <recommendedName>
        <fullName>Glucose-6-phosphatase catalytic subunit 1</fullName>
        <ecNumber evidence="2">3.1.3.9</ecNumber>
    </recommendedName>
    <alternativeName>
        <fullName>Glucose-6-phosphatase</fullName>
        <shortName>G-6-Pase</shortName>
        <shortName>G6Pase</shortName>
    </alternativeName>
</protein>
<organism>
    <name type="scientific">Haplochromis xenognathus</name>
    <name type="common">Lake Victoria cichlid</name>
    <name type="synonym">Ptyochromis xenognathus</name>
    <dbReference type="NCBI Taxonomy" id="51185"/>
    <lineage>
        <taxon>Eukaryota</taxon>
        <taxon>Metazoa</taxon>
        <taxon>Chordata</taxon>
        <taxon>Craniata</taxon>
        <taxon>Vertebrata</taxon>
        <taxon>Euteleostomi</taxon>
        <taxon>Actinopterygii</taxon>
        <taxon>Neopterygii</taxon>
        <taxon>Teleostei</taxon>
        <taxon>Neoteleostei</taxon>
        <taxon>Acanthomorphata</taxon>
        <taxon>Ovalentaria</taxon>
        <taxon>Cichlomorphae</taxon>
        <taxon>Cichliformes</taxon>
        <taxon>Cichlidae</taxon>
        <taxon>African cichlids</taxon>
        <taxon>Pseudocrenilabrinae</taxon>
        <taxon>Haplochromini</taxon>
        <taxon>Haplochromis</taxon>
    </lineage>
</organism>
<gene>
    <name type="primary">g6pc1</name>
    <name type="synonym">g6pc</name>
    <name type="synonym">g6pt</name>
</gene>
<sequence length="277" mass="30971">FGERPYWWVHETKFYGAGPAPSLQQFPITCETGPGSPSGHAMGAAGVWYVMVTALLSIAREKQCPPLLYRFLYIGLWMLMGLVELVVCISRVYMAAHFPHQVIAGIITGTLVAEVVSKEKWIYSASLKKYFLITLFLTSFAVGFYVLLKALDVDLLWTMEKAQKWCIRPEWVHLDSAPFASLLRNMGSLFGLGLGLHSPFYKTTKMRIMSAPLRIGCIVISVSLLHLLDGWTFSPENHMTFYALSFGKSAVALLIPTTLVPWALSKIYPVKTEGKNL</sequence>
<proteinExistence type="evidence at transcript level"/>
<name>G6PC1_HAPXE</name>
<keyword id="KW-0256">Endoplasmic reticulum</keyword>
<keyword id="KW-0312">Gluconeogenesis</keyword>
<keyword id="KW-0378">Hydrolase</keyword>
<keyword id="KW-0472">Membrane</keyword>
<keyword id="KW-0812">Transmembrane</keyword>
<keyword id="KW-1133">Transmembrane helix</keyword>
<feature type="chain" id="PRO_0000087412" description="Glucose-6-phosphatase catalytic subunit 1">
    <location>
        <begin position="1" status="less than"/>
        <end position="277"/>
    </location>
</feature>
<feature type="transmembrane region" description="Helical" evidence="3">
    <location>
        <begin position="39"/>
        <end position="59"/>
    </location>
</feature>
<feature type="transmembrane region" description="Helical" evidence="3">
    <location>
        <begin position="67"/>
        <end position="87"/>
    </location>
</feature>
<feature type="transmembrane region" description="Helical" evidence="3">
    <location>
        <begin position="131"/>
        <end position="151"/>
    </location>
</feature>
<feature type="transmembrane region" description="Helical" evidence="3">
    <location>
        <begin position="215"/>
        <end position="235"/>
    </location>
</feature>
<feature type="transmembrane region" description="Helical" evidence="3">
    <location>
        <begin position="250"/>
        <end position="270"/>
    </location>
</feature>
<feature type="short sequence motif" description="Prevents secretion from ER" evidence="3">
    <location>
        <begin position="274"/>
        <end position="277"/>
    </location>
</feature>
<feature type="active site" description="Proton donor" evidence="3">
    <location>
        <position position="40"/>
    </location>
</feature>
<feature type="active site" description="Nucleophile" evidence="1">
    <location>
        <position position="97"/>
    </location>
</feature>
<feature type="binding site" evidence="3">
    <location>
        <position position="4"/>
    </location>
    <ligand>
        <name>substrate</name>
    </ligand>
</feature>
<feature type="binding site" evidence="3">
    <location>
        <position position="91"/>
    </location>
    <ligand>
        <name>substrate</name>
    </ligand>
</feature>
<feature type="non-terminal residue">
    <location>
        <position position="1"/>
    </location>
</feature>
<comment type="function">
    <text evidence="2">Hydrolyzes glucose-6-phosphate to glucose in the endoplasmic reticulum. Forms with the glucose-6-phosphate transporter (SLC37A4/G6PT) the complex responsible for glucose production in the terminal step of glycogenolysis and gluconeogenesis. Hence, it is the key enzyme in homeostatic regulation of blood glucose levels.</text>
</comment>
<comment type="catalytic activity">
    <reaction evidence="2">
        <text>D-glucose 6-phosphate + H2O = D-glucose + phosphate</text>
        <dbReference type="Rhea" id="RHEA:16689"/>
        <dbReference type="ChEBI" id="CHEBI:4167"/>
        <dbReference type="ChEBI" id="CHEBI:15377"/>
        <dbReference type="ChEBI" id="CHEBI:43474"/>
        <dbReference type="ChEBI" id="CHEBI:61548"/>
        <dbReference type="EC" id="3.1.3.9"/>
    </reaction>
</comment>
<comment type="pathway">
    <text evidence="2">Carbohydrate biosynthesis; gluconeogenesis.</text>
</comment>
<comment type="subcellular location">
    <subcellularLocation>
        <location evidence="2">Endoplasmic reticulum membrane</location>
        <topology evidence="3">Multi-pass membrane protein</topology>
    </subcellularLocation>
</comment>
<comment type="similarity">
    <text evidence="4">Belongs to the glucose-6-phosphatase family.</text>
</comment>